<protein>
    <recommendedName>
        <fullName evidence="1">Peptidyl-tRNA hydrolase</fullName>
        <shortName evidence="1">Pth</shortName>
        <ecNumber evidence="1">3.1.1.29</ecNumber>
    </recommendedName>
</protein>
<name>PTH_STRP4</name>
<accession>B5E572</accession>
<dbReference type="EC" id="3.1.1.29" evidence="1"/>
<dbReference type="EMBL" id="CP001015">
    <property type="protein sequence ID" value="ACF56061.1"/>
    <property type="molecule type" value="Genomic_DNA"/>
</dbReference>
<dbReference type="SMR" id="B5E572"/>
<dbReference type="KEGG" id="spx:SPG_0005"/>
<dbReference type="HOGENOM" id="CLU_062456_4_1_9"/>
<dbReference type="GO" id="GO:0005737">
    <property type="term" value="C:cytoplasm"/>
    <property type="evidence" value="ECO:0007669"/>
    <property type="project" value="UniProtKB-SubCell"/>
</dbReference>
<dbReference type="GO" id="GO:0004045">
    <property type="term" value="F:peptidyl-tRNA hydrolase activity"/>
    <property type="evidence" value="ECO:0007669"/>
    <property type="project" value="UniProtKB-UniRule"/>
</dbReference>
<dbReference type="GO" id="GO:0000049">
    <property type="term" value="F:tRNA binding"/>
    <property type="evidence" value="ECO:0007669"/>
    <property type="project" value="UniProtKB-UniRule"/>
</dbReference>
<dbReference type="GO" id="GO:0006515">
    <property type="term" value="P:protein quality control for misfolded or incompletely synthesized proteins"/>
    <property type="evidence" value="ECO:0007669"/>
    <property type="project" value="UniProtKB-UniRule"/>
</dbReference>
<dbReference type="GO" id="GO:0072344">
    <property type="term" value="P:rescue of stalled ribosome"/>
    <property type="evidence" value="ECO:0007669"/>
    <property type="project" value="UniProtKB-UniRule"/>
</dbReference>
<dbReference type="CDD" id="cd00462">
    <property type="entry name" value="PTH"/>
    <property type="match status" value="1"/>
</dbReference>
<dbReference type="FunFam" id="3.40.50.1470:FF:000001">
    <property type="entry name" value="Peptidyl-tRNA hydrolase"/>
    <property type="match status" value="1"/>
</dbReference>
<dbReference type="Gene3D" id="3.40.50.1470">
    <property type="entry name" value="Peptidyl-tRNA hydrolase"/>
    <property type="match status" value="1"/>
</dbReference>
<dbReference type="HAMAP" id="MF_00083">
    <property type="entry name" value="Pept_tRNA_hydro_bact"/>
    <property type="match status" value="1"/>
</dbReference>
<dbReference type="InterPro" id="IPR001328">
    <property type="entry name" value="Pept_tRNA_hydro"/>
</dbReference>
<dbReference type="InterPro" id="IPR018171">
    <property type="entry name" value="Pept_tRNA_hydro_CS"/>
</dbReference>
<dbReference type="InterPro" id="IPR036416">
    <property type="entry name" value="Pept_tRNA_hydro_sf"/>
</dbReference>
<dbReference type="NCBIfam" id="TIGR00447">
    <property type="entry name" value="pth"/>
    <property type="match status" value="1"/>
</dbReference>
<dbReference type="PANTHER" id="PTHR17224">
    <property type="entry name" value="PEPTIDYL-TRNA HYDROLASE"/>
    <property type="match status" value="1"/>
</dbReference>
<dbReference type="PANTHER" id="PTHR17224:SF1">
    <property type="entry name" value="PEPTIDYL-TRNA HYDROLASE"/>
    <property type="match status" value="1"/>
</dbReference>
<dbReference type="Pfam" id="PF01195">
    <property type="entry name" value="Pept_tRNA_hydro"/>
    <property type="match status" value="1"/>
</dbReference>
<dbReference type="SUPFAM" id="SSF53178">
    <property type="entry name" value="Peptidyl-tRNA hydrolase-like"/>
    <property type="match status" value="1"/>
</dbReference>
<dbReference type="PROSITE" id="PS01195">
    <property type="entry name" value="PEPT_TRNA_HYDROL_1"/>
    <property type="match status" value="1"/>
</dbReference>
<dbReference type="PROSITE" id="PS01196">
    <property type="entry name" value="PEPT_TRNA_HYDROL_2"/>
    <property type="match status" value="1"/>
</dbReference>
<evidence type="ECO:0000255" key="1">
    <source>
        <dbReference type="HAMAP-Rule" id="MF_00083"/>
    </source>
</evidence>
<keyword id="KW-0963">Cytoplasm</keyword>
<keyword id="KW-0378">Hydrolase</keyword>
<keyword id="KW-0694">RNA-binding</keyword>
<keyword id="KW-0820">tRNA-binding</keyword>
<feature type="chain" id="PRO_1000092991" description="Peptidyl-tRNA hydrolase">
    <location>
        <begin position="1"/>
        <end position="189"/>
    </location>
</feature>
<feature type="active site" description="Proton acceptor" evidence="1">
    <location>
        <position position="20"/>
    </location>
</feature>
<feature type="binding site" evidence="1">
    <location>
        <position position="15"/>
    </location>
    <ligand>
        <name>tRNA</name>
        <dbReference type="ChEBI" id="CHEBI:17843"/>
    </ligand>
</feature>
<feature type="binding site" evidence="1">
    <location>
        <position position="66"/>
    </location>
    <ligand>
        <name>tRNA</name>
        <dbReference type="ChEBI" id="CHEBI:17843"/>
    </ligand>
</feature>
<feature type="binding site" evidence="1">
    <location>
        <position position="68"/>
    </location>
    <ligand>
        <name>tRNA</name>
        <dbReference type="ChEBI" id="CHEBI:17843"/>
    </ligand>
</feature>
<feature type="binding site" evidence="1">
    <location>
        <position position="114"/>
    </location>
    <ligand>
        <name>tRNA</name>
        <dbReference type="ChEBI" id="CHEBI:17843"/>
    </ligand>
</feature>
<feature type="site" description="Discriminates between blocked and unblocked aminoacyl-tRNA" evidence="1">
    <location>
        <position position="10"/>
    </location>
</feature>
<feature type="site" description="Stabilizes the basic form of H active site to accept a proton" evidence="1">
    <location>
        <position position="93"/>
    </location>
</feature>
<proteinExistence type="inferred from homology"/>
<organism>
    <name type="scientific">Streptococcus pneumoniae serotype 19F (strain G54)</name>
    <dbReference type="NCBI Taxonomy" id="512566"/>
    <lineage>
        <taxon>Bacteria</taxon>
        <taxon>Bacillati</taxon>
        <taxon>Bacillota</taxon>
        <taxon>Bacilli</taxon>
        <taxon>Lactobacillales</taxon>
        <taxon>Streptococcaceae</taxon>
        <taxon>Streptococcus</taxon>
    </lineage>
</organism>
<reference key="1">
    <citation type="journal article" date="2001" name="Microb. Drug Resist.">
        <title>Annotated draft genomic sequence from a Streptococcus pneumoniae type 19F clinical isolate.</title>
        <authorList>
            <person name="Dopazo J."/>
            <person name="Mendoza A."/>
            <person name="Herrero J."/>
            <person name="Caldara F."/>
            <person name="Humbert Y."/>
            <person name="Friedli L."/>
            <person name="Guerrier M."/>
            <person name="Grand-Schenk E."/>
            <person name="Gandin C."/>
            <person name="de Francesco M."/>
            <person name="Polissi A."/>
            <person name="Buell G."/>
            <person name="Feger G."/>
            <person name="Garcia E."/>
            <person name="Peitsch M."/>
            <person name="Garcia-Bustos J.F."/>
        </authorList>
    </citation>
    <scope>NUCLEOTIDE SEQUENCE [LARGE SCALE GENOMIC DNA]</scope>
    <source>
        <strain>G54</strain>
    </source>
</reference>
<reference key="2">
    <citation type="submission" date="2008-03" db="EMBL/GenBank/DDBJ databases">
        <title>Pneumococcal beta glucoside metabolism investigated by whole genome comparison.</title>
        <authorList>
            <person name="Mulas L."/>
            <person name="Trappetti C."/>
            <person name="Hakenbeck R."/>
            <person name="Iannelli F."/>
            <person name="Pozzi G."/>
            <person name="Davidsen T.M."/>
            <person name="Tettelin H."/>
            <person name="Oggioni M."/>
        </authorList>
    </citation>
    <scope>NUCLEOTIDE SEQUENCE [LARGE SCALE GENOMIC DNA]</scope>
    <source>
        <strain>G54</strain>
    </source>
</reference>
<comment type="function">
    <text evidence="1">Hydrolyzes ribosome-free peptidyl-tRNAs (with 1 or more amino acids incorporated), which drop off the ribosome during protein synthesis, or as a result of ribosome stalling.</text>
</comment>
<comment type="function">
    <text evidence="1">Catalyzes the release of premature peptidyl moieties from peptidyl-tRNA molecules trapped in stalled 50S ribosomal subunits, and thus maintains levels of free tRNAs and 50S ribosomes.</text>
</comment>
<comment type="catalytic activity">
    <reaction evidence="1">
        <text>an N-acyl-L-alpha-aminoacyl-tRNA + H2O = an N-acyl-L-amino acid + a tRNA + H(+)</text>
        <dbReference type="Rhea" id="RHEA:54448"/>
        <dbReference type="Rhea" id="RHEA-COMP:10123"/>
        <dbReference type="Rhea" id="RHEA-COMP:13883"/>
        <dbReference type="ChEBI" id="CHEBI:15377"/>
        <dbReference type="ChEBI" id="CHEBI:15378"/>
        <dbReference type="ChEBI" id="CHEBI:59874"/>
        <dbReference type="ChEBI" id="CHEBI:78442"/>
        <dbReference type="ChEBI" id="CHEBI:138191"/>
        <dbReference type="EC" id="3.1.1.29"/>
    </reaction>
</comment>
<comment type="subunit">
    <text evidence="1">Monomer.</text>
</comment>
<comment type="subcellular location">
    <subcellularLocation>
        <location evidence="1">Cytoplasm</location>
    </subcellularLocation>
</comment>
<comment type="similarity">
    <text evidence="1">Belongs to the PTH family.</text>
</comment>
<gene>
    <name evidence="1" type="primary">pth</name>
    <name type="ordered locus">SPG_0005</name>
</gene>
<sequence length="189" mass="21391">MTKLLVGLGNPGDKYFETKHNVGFMLIDQLAKKQNVTFTHDKIFQADLASFFLNGEKIYLVKPTTFMNESGKAVHALLTYYGLDIDDLLIIYDDLDMEVGKIRLRAKGSAGGHNGIKSIIQHIGTQVFNRVKIGIGRPKNGMSVVHHVLSKFDRDDYIGILQSVDKVDDSVNYYLQEKNFEKTMQRYNG</sequence>